<proteinExistence type="inferred from homology"/>
<dbReference type="EC" id="4.2.3.4" evidence="1"/>
<dbReference type="EMBL" id="CP000124">
    <property type="protein sequence ID" value="ABA48638.1"/>
    <property type="molecule type" value="Genomic_DNA"/>
</dbReference>
<dbReference type="RefSeq" id="WP_004196751.1">
    <property type="nucleotide sequence ID" value="NC_007434.1"/>
</dbReference>
<dbReference type="SMR" id="Q3JMW1"/>
<dbReference type="EnsemblBacteria" id="ABA48638">
    <property type="protein sequence ID" value="ABA48638"/>
    <property type="gene ID" value="BURPS1710b_3728"/>
</dbReference>
<dbReference type="GeneID" id="92980425"/>
<dbReference type="KEGG" id="bpm:BURPS1710b_3728"/>
<dbReference type="HOGENOM" id="CLU_001201_0_2_4"/>
<dbReference type="UniPathway" id="UPA00053">
    <property type="reaction ID" value="UER00085"/>
</dbReference>
<dbReference type="Proteomes" id="UP000002700">
    <property type="component" value="Chromosome I"/>
</dbReference>
<dbReference type="GO" id="GO:0005737">
    <property type="term" value="C:cytoplasm"/>
    <property type="evidence" value="ECO:0007669"/>
    <property type="project" value="UniProtKB-SubCell"/>
</dbReference>
<dbReference type="GO" id="GO:0003856">
    <property type="term" value="F:3-dehydroquinate synthase activity"/>
    <property type="evidence" value="ECO:0007669"/>
    <property type="project" value="UniProtKB-UniRule"/>
</dbReference>
<dbReference type="GO" id="GO:0046872">
    <property type="term" value="F:metal ion binding"/>
    <property type="evidence" value="ECO:0007669"/>
    <property type="project" value="UniProtKB-KW"/>
</dbReference>
<dbReference type="GO" id="GO:0000166">
    <property type="term" value="F:nucleotide binding"/>
    <property type="evidence" value="ECO:0007669"/>
    <property type="project" value="UniProtKB-KW"/>
</dbReference>
<dbReference type="GO" id="GO:0008652">
    <property type="term" value="P:amino acid biosynthetic process"/>
    <property type="evidence" value="ECO:0007669"/>
    <property type="project" value="UniProtKB-KW"/>
</dbReference>
<dbReference type="GO" id="GO:0009073">
    <property type="term" value="P:aromatic amino acid family biosynthetic process"/>
    <property type="evidence" value="ECO:0007669"/>
    <property type="project" value="UniProtKB-KW"/>
</dbReference>
<dbReference type="GO" id="GO:0009423">
    <property type="term" value="P:chorismate biosynthetic process"/>
    <property type="evidence" value="ECO:0007669"/>
    <property type="project" value="UniProtKB-UniRule"/>
</dbReference>
<dbReference type="CDD" id="cd08195">
    <property type="entry name" value="DHQS"/>
    <property type="match status" value="1"/>
</dbReference>
<dbReference type="FunFam" id="3.40.50.1970:FF:000001">
    <property type="entry name" value="3-dehydroquinate synthase"/>
    <property type="match status" value="1"/>
</dbReference>
<dbReference type="Gene3D" id="3.40.50.1970">
    <property type="match status" value="1"/>
</dbReference>
<dbReference type="Gene3D" id="1.20.1090.10">
    <property type="entry name" value="Dehydroquinate synthase-like - alpha domain"/>
    <property type="match status" value="1"/>
</dbReference>
<dbReference type="HAMAP" id="MF_00110">
    <property type="entry name" value="DHQ_synthase"/>
    <property type="match status" value="1"/>
</dbReference>
<dbReference type="InterPro" id="IPR050071">
    <property type="entry name" value="Dehydroquinate_synthase"/>
</dbReference>
<dbReference type="InterPro" id="IPR016037">
    <property type="entry name" value="DHQ_synth_AroB"/>
</dbReference>
<dbReference type="InterPro" id="IPR030963">
    <property type="entry name" value="DHQ_synth_fam"/>
</dbReference>
<dbReference type="InterPro" id="IPR030960">
    <property type="entry name" value="DHQS/DOIS_N"/>
</dbReference>
<dbReference type="InterPro" id="IPR056179">
    <property type="entry name" value="DHQS_C"/>
</dbReference>
<dbReference type="NCBIfam" id="TIGR01357">
    <property type="entry name" value="aroB"/>
    <property type="match status" value="1"/>
</dbReference>
<dbReference type="PANTHER" id="PTHR43622">
    <property type="entry name" value="3-DEHYDROQUINATE SYNTHASE"/>
    <property type="match status" value="1"/>
</dbReference>
<dbReference type="PANTHER" id="PTHR43622:SF7">
    <property type="entry name" value="3-DEHYDROQUINATE SYNTHASE, CHLOROPLASTIC"/>
    <property type="match status" value="1"/>
</dbReference>
<dbReference type="Pfam" id="PF01761">
    <property type="entry name" value="DHQ_synthase"/>
    <property type="match status" value="1"/>
</dbReference>
<dbReference type="Pfam" id="PF24621">
    <property type="entry name" value="DHQS_C"/>
    <property type="match status" value="1"/>
</dbReference>
<dbReference type="PIRSF" id="PIRSF001455">
    <property type="entry name" value="DHQ_synth"/>
    <property type="match status" value="1"/>
</dbReference>
<dbReference type="SUPFAM" id="SSF56796">
    <property type="entry name" value="Dehydroquinate synthase-like"/>
    <property type="match status" value="1"/>
</dbReference>
<organism>
    <name type="scientific">Burkholderia pseudomallei (strain 1710b)</name>
    <dbReference type="NCBI Taxonomy" id="320372"/>
    <lineage>
        <taxon>Bacteria</taxon>
        <taxon>Pseudomonadati</taxon>
        <taxon>Pseudomonadota</taxon>
        <taxon>Betaproteobacteria</taxon>
        <taxon>Burkholderiales</taxon>
        <taxon>Burkholderiaceae</taxon>
        <taxon>Burkholderia</taxon>
        <taxon>pseudomallei group</taxon>
    </lineage>
</organism>
<sequence length="359" mass="37896">MITVNVDLGERAYPIHIGADLIGRTELFAPHIAGASVTIVTNTTVEPLYGDTLRAALAPLGKRVSTVVLPDGEAYKNWETLNLIFDGLLEQHADRKTTLIALGGGVIGDMTGFAAACYMRGVPFIQVPTTLLSQVDSSVGGKTGINHPLGKNMIGAFYQPQAVIADIGALSTLPDRELAAGVAEIVKTGAIADAAFFDWIEANVGALTRRDPDALAHAVKRSCEIKAGVVAADEREGGLRAILNFGHTFGHAIEAGLGYGEWLHGEAVGCGMVMAADLSVRTGHLDEASRARLCRVVEAAHLPTRAPDLGDARYVELMRVDKKAEAGAIKFILLKRFGETIITPAPDDAVLATLAATTR</sequence>
<comment type="function">
    <text evidence="1">Catalyzes the conversion of 3-deoxy-D-arabino-heptulosonate 7-phosphate (DAHP) to dehydroquinate (DHQ).</text>
</comment>
<comment type="catalytic activity">
    <reaction evidence="1">
        <text>7-phospho-2-dehydro-3-deoxy-D-arabino-heptonate = 3-dehydroquinate + phosphate</text>
        <dbReference type="Rhea" id="RHEA:21968"/>
        <dbReference type="ChEBI" id="CHEBI:32364"/>
        <dbReference type="ChEBI" id="CHEBI:43474"/>
        <dbReference type="ChEBI" id="CHEBI:58394"/>
        <dbReference type="EC" id="4.2.3.4"/>
    </reaction>
</comment>
<comment type="cofactor">
    <cofactor evidence="1">
        <name>Co(2+)</name>
        <dbReference type="ChEBI" id="CHEBI:48828"/>
    </cofactor>
    <cofactor evidence="1">
        <name>Zn(2+)</name>
        <dbReference type="ChEBI" id="CHEBI:29105"/>
    </cofactor>
    <text evidence="1">Binds 1 divalent metal cation per subunit. Can use either Co(2+) or Zn(2+).</text>
</comment>
<comment type="cofactor">
    <cofactor evidence="1">
        <name>NAD(+)</name>
        <dbReference type="ChEBI" id="CHEBI:57540"/>
    </cofactor>
</comment>
<comment type="pathway">
    <text evidence="1">Metabolic intermediate biosynthesis; chorismate biosynthesis; chorismate from D-erythrose 4-phosphate and phosphoenolpyruvate: step 2/7.</text>
</comment>
<comment type="subcellular location">
    <subcellularLocation>
        <location evidence="1">Cytoplasm</location>
    </subcellularLocation>
</comment>
<comment type="similarity">
    <text evidence="1">Belongs to the sugar phosphate cyclases superfamily. Dehydroquinate synthase family.</text>
</comment>
<gene>
    <name evidence="1" type="primary">aroB</name>
    <name type="ordered locus">BURPS1710b_3728</name>
</gene>
<name>AROB_BURP1</name>
<feature type="chain" id="PRO_0000231075" description="3-dehydroquinate synthase">
    <location>
        <begin position="1"/>
        <end position="359"/>
    </location>
</feature>
<feature type="binding site" evidence="1">
    <location>
        <begin position="71"/>
        <end position="76"/>
    </location>
    <ligand>
        <name>NAD(+)</name>
        <dbReference type="ChEBI" id="CHEBI:57540"/>
    </ligand>
</feature>
<feature type="binding site" evidence="1">
    <location>
        <begin position="105"/>
        <end position="109"/>
    </location>
    <ligand>
        <name>NAD(+)</name>
        <dbReference type="ChEBI" id="CHEBI:57540"/>
    </ligand>
</feature>
<feature type="binding site" evidence="1">
    <location>
        <begin position="129"/>
        <end position="130"/>
    </location>
    <ligand>
        <name>NAD(+)</name>
        <dbReference type="ChEBI" id="CHEBI:57540"/>
    </ligand>
</feature>
<feature type="binding site" evidence="1">
    <location>
        <position position="142"/>
    </location>
    <ligand>
        <name>NAD(+)</name>
        <dbReference type="ChEBI" id="CHEBI:57540"/>
    </ligand>
</feature>
<feature type="binding site" evidence="1">
    <location>
        <position position="151"/>
    </location>
    <ligand>
        <name>NAD(+)</name>
        <dbReference type="ChEBI" id="CHEBI:57540"/>
    </ligand>
</feature>
<feature type="binding site" evidence="1">
    <location>
        <position position="184"/>
    </location>
    <ligand>
        <name>Zn(2+)</name>
        <dbReference type="ChEBI" id="CHEBI:29105"/>
    </ligand>
</feature>
<feature type="binding site" evidence="1">
    <location>
        <position position="247"/>
    </location>
    <ligand>
        <name>Zn(2+)</name>
        <dbReference type="ChEBI" id="CHEBI:29105"/>
    </ligand>
</feature>
<feature type="binding site" evidence="1">
    <location>
        <position position="264"/>
    </location>
    <ligand>
        <name>Zn(2+)</name>
        <dbReference type="ChEBI" id="CHEBI:29105"/>
    </ligand>
</feature>
<keyword id="KW-0028">Amino-acid biosynthesis</keyword>
<keyword id="KW-0057">Aromatic amino acid biosynthesis</keyword>
<keyword id="KW-0170">Cobalt</keyword>
<keyword id="KW-0963">Cytoplasm</keyword>
<keyword id="KW-0456">Lyase</keyword>
<keyword id="KW-0479">Metal-binding</keyword>
<keyword id="KW-0520">NAD</keyword>
<keyword id="KW-0547">Nucleotide-binding</keyword>
<keyword id="KW-0862">Zinc</keyword>
<accession>Q3JMW1</accession>
<protein>
    <recommendedName>
        <fullName evidence="1">3-dehydroquinate synthase</fullName>
        <shortName evidence="1">DHQS</shortName>
        <ecNumber evidence="1">4.2.3.4</ecNumber>
    </recommendedName>
</protein>
<reference key="1">
    <citation type="journal article" date="2010" name="Genome Biol. Evol.">
        <title>Continuing evolution of Burkholderia mallei through genome reduction and large-scale rearrangements.</title>
        <authorList>
            <person name="Losada L."/>
            <person name="Ronning C.M."/>
            <person name="DeShazer D."/>
            <person name="Woods D."/>
            <person name="Fedorova N."/>
            <person name="Kim H.S."/>
            <person name="Shabalina S.A."/>
            <person name="Pearson T.R."/>
            <person name="Brinkac L."/>
            <person name="Tan P."/>
            <person name="Nandi T."/>
            <person name="Crabtree J."/>
            <person name="Badger J."/>
            <person name="Beckstrom-Sternberg S."/>
            <person name="Saqib M."/>
            <person name="Schutzer S.E."/>
            <person name="Keim P."/>
            <person name="Nierman W.C."/>
        </authorList>
    </citation>
    <scope>NUCLEOTIDE SEQUENCE [LARGE SCALE GENOMIC DNA]</scope>
    <source>
        <strain>1710b</strain>
    </source>
</reference>
<evidence type="ECO:0000255" key="1">
    <source>
        <dbReference type="HAMAP-Rule" id="MF_00110"/>
    </source>
</evidence>